<protein>
    <recommendedName>
        <fullName>Signal peptidase complex subunit 1</fullName>
    </recommendedName>
    <alternativeName>
        <fullName>Microsomal signal peptidase 12 kDa subunit</fullName>
        <shortName>SPase 12 kDa subunit</shortName>
    </alternativeName>
</protein>
<feature type="chain" id="PRO_0000215155" description="Signal peptidase complex subunit 1">
    <location>
        <begin position="1"/>
        <end position="161"/>
    </location>
</feature>
<feature type="topological domain" description="Cytoplasmic" evidence="2">
    <location>
        <begin position="1"/>
        <end position="85"/>
    </location>
</feature>
<feature type="transmembrane region" description="Helical" evidence="4">
    <location>
        <begin position="86"/>
        <end position="106"/>
    </location>
</feature>
<feature type="topological domain" description="Lumenal" evidence="2">
    <location>
        <position position="107"/>
    </location>
</feature>
<feature type="transmembrane region" description="Helical" evidence="4">
    <location>
        <begin position="108"/>
        <end position="128"/>
    </location>
</feature>
<feature type="topological domain" description="Cytoplasmic" evidence="2">
    <location>
        <begin position="129"/>
        <end position="161"/>
    </location>
</feature>
<feature type="region of interest" description="Disordered" evidence="5">
    <location>
        <begin position="1"/>
        <end position="22"/>
    </location>
</feature>
<feature type="sequence conflict" description="In Ref. 1; AAH49895." evidence="6" ref="1">
    <original>T</original>
    <variation>A</variation>
    <location>
        <position position="40"/>
    </location>
</feature>
<feature type="sequence conflict" description="In Ref. 2; BAB24969." evidence="6" ref="2">
    <original>I</original>
    <variation>V</variation>
    <location>
        <position position="86"/>
    </location>
</feature>
<dbReference type="EMBL" id="BC034270">
    <property type="status" value="NOT_ANNOTATED_CDS"/>
    <property type="molecule type" value="mRNA"/>
</dbReference>
<dbReference type="EMBL" id="BC049895">
    <property type="protein sequence ID" value="AAH49895.1"/>
    <property type="status" value="ALT_INIT"/>
    <property type="molecule type" value="mRNA"/>
</dbReference>
<dbReference type="EMBL" id="AK007336">
    <property type="protein sequence ID" value="BAB24969.1"/>
    <property type="status" value="ALT_INIT"/>
    <property type="molecule type" value="mRNA"/>
</dbReference>
<dbReference type="EMBL" id="AK082928">
    <property type="protein sequence ID" value="BAC38696.1"/>
    <property type="status" value="ALT_INIT"/>
    <property type="molecule type" value="mRNA"/>
</dbReference>
<dbReference type="RefSeq" id="NP_081187.2">
    <property type="nucleotide sequence ID" value="NM_026911.3"/>
</dbReference>
<dbReference type="SMR" id="Q9D958"/>
<dbReference type="BioGRID" id="213174">
    <property type="interactions" value="2"/>
</dbReference>
<dbReference type="FunCoup" id="Q9D958">
    <property type="interactions" value="715"/>
</dbReference>
<dbReference type="STRING" id="10090.ENSMUSP00000139654"/>
<dbReference type="iPTMnet" id="Q9D958"/>
<dbReference type="PhosphoSitePlus" id="Q9D958"/>
<dbReference type="SwissPalm" id="Q9D958"/>
<dbReference type="jPOST" id="Q9D958"/>
<dbReference type="PaxDb" id="10090-ENSMUSP00000124428"/>
<dbReference type="PeptideAtlas" id="Q9D958"/>
<dbReference type="ProteomicsDB" id="261120"/>
<dbReference type="Pumba" id="Q9D958"/>
<dbReference type="Antibodypedia" id="46194">
    <property type="antibodies" value="81 antibodies from 17 providers"/>
</dbReference>
<dbReference type="DNASU" id="69019"/>
<dbReference type="Ensembl" id="ENSMUST00000186131.7">
    <property type="protein sequence ID" value="ENSMUSP00000139654.2"/>
    <property type="gene ID" value="ENSMUSG00000021917.17"/>
</dbReference>
<dbReference type="Ensembl" id="ENSMUST00000226782.2">
    <property type="protein sequence ID" value="ENSMUSP00000154282.2"/>
    <property type="gene ID" value="ENSMUSG00000021917.17"/>
</dbReference>
<dbReference type="GeneID" id="69019"/>
<dbReference type="KEGG" id="mmu:69019"/>
<dbReference type="UCSC" id="uc007swe.2">
    <property type="organism name" value="mouse"/>
</dbReference>
<dbReference type="AGR" id="MGI:1916269"/>
<dbReference type="CTD" id="28972"/>
<dbReference type="MGI" id="MGI:1916269">
    <property type="gene designation" value="Spcs1"/>
</dbReference>
<dbReference type="VEuPathDB" id="HostDB:ENSMUSG00000021917"/>
<dbReference type="eggNOG" id="KOG4112">
    <property type="taxonomic scope" value="Eukaryota"/>
</dbReference>
<dbReference type="GeneTree" id="ENSGT00390000018321"/>
<dbReference type="InParanoid" id="Q9D958"/>
<dbReference type="OrthoDB" id="263893at2759"/>
<dbReference type="PhylomeDB" id="Q9D958"/>
<dbReference type="TreeFam" id="TF106122"/>
<dbReference type="Reactome" id="R-MMU-422085">
    <property type="pathway name" value="Synthesis, secretion, and deacylation of Ghrelin"/>
</dbReference>
<dbReference type="BioGRID-ORCS" id="69019">
    <property type="hits" value="7 hits in 61 CRISPR screens"/>
</dbReference>
<dbReference type="ChiTaRS" id="Spcs1">
    <property type="organism name" value="mouse"/>
</dbReference>
<dbReference type="PRO" id="PR:Q9D958"/>
<dbReference type="Proteomes" id="UP000000589">
    <property type="component" value="Chromosome 14"/>
</dbReference>
<dbReference type="RNAct" id="Q9D958">
    <property type="molecule type" value="protein"/>
</dbReference>
<dbReference type="Bgee" id="ENSMUSG00000021917">
    <property type="expression patterns" value="Expressed in seminal vesicle and 261 other cell types or tissues"/>
</dbReference>
<dbReference type="ExpressionAtlas" id="Q9D958">
    <property type="expression patterns" value="baseline and differential"/>
</dbReference>
<dbReference type="GO" id="GO:0005789">
    <property type="term" value="C:endoplasmic reticulum membrane"/>
    <property type="evidence" value="ECO:0000250"/>
    <property type="project" value="UniProtKB"/>
</dbReference>
<dbReference type="GO" id="GO:0005787">
    <property type="term" value="C:signal peptidase complex"/>
    <property type="evidence" value="ECO:0007669"/>
    <property type="project" value="InterPro"/>
</dbReference>
<dbReference type="GO" id="GO:0043022">
    <property type="term" value="F:ribosome binding"/>
    <property type="evidence" value="ECO:0000314"/>
    <property type="project" value="MGI"/>
</dbReference>
<dbReference type="GO" id="GO:0006465">
    <property type="term" value="P:signal peptide processing"/>
    <property type="evidence" value="ECO:0007669"/>
    <property type="project" value="InterPro"/>
</dbReference>
<dbReference type="InterPro" id="IPR009542">
    <property type="entry name" value="Spc1/SPCS1"/>
</dbReference>
<dbReference type="PANTHER" id="PTHR13202">
    <property type="entry name" value="MICROSOMAL SIGNAL PEPTIDASE 12 KDA SUBUNIT"/>
    <property type="match status" value="1"/>
</dbReference>
<dbReference type="PANTHER" id="PTHR13202:SF0">
    <property type="entry name" value="SIGNAL PEPTIDASE COMPLEX SUBUNIT 1"/>
    <property type="match status" value="1"/>
</dbReference>
<dbReference type="Pfam" id="PF06645">
    <property type="entry name" value="SPC12"/>
    <property type="match status" value="1"/>
</dbReference>
<comment type="function">
    <text evidence="1 3">Component of the signal peptidase complex (SPC) which catalyzes the cleavage of N-terminal signal sequences from nascent proteins as they are translocated into the lumen of the endoplasmic reticulum (By similarity). Dispensable for SPC enzymatic activity (By similarity).</text>
</comment>
<comment type="subunit">
    <text evidence="3">Component of the signal peptidase complex paralog A (SPC-A) composed of a catalytic subunit SEC11A and three accessory subunits SPCS1, SPCS2 and SPCS3. Component of the signal peptidase complex paralog C (SPC-C) composed of a catalytic subunit SEC11C and three accessory subunits SPCS1, SPCS2 and SPCS3. Within the complex, interacts with SPCS2 and SPCS3. The complex induces a local thinning of the ER membrane which is used to measure the length of the signal peptide (SP) h-region of protein substrates. This ensures the selectivity of the complex towards h-regions shorter than 18-20 amino acids.</text>
</comment>
<comment type="subcellular location">
    <subcellularLocation>
        <location evidence="2">Endoplasmic reticulum membrane</location>
        <topology evidence="2">Multi-pass membrane protein</topology>
    </subcellularLocation>
</comment>
<comment type="PTM">
    <text evidence="3">May be phosphorylated.</text>
</comment>
<comment type="similarity">
    <text evidence="6">Belongs to the SPCS1 family.</text>
</comment>
<comment type="caution">
    <text evidence="6">It is uncertain whether Met-1 or Met-60 is the initiator.</text>
</comment>
<comment type="sequence caution" evidence="6">
    <conflict type="erroneous initiation">
        <sequence resource="EMBL-CDS" id="AAH49895"/>
    </conflict>
    <text>Truncated N-terminus.</text>
</comment>
<comment type="sequence caution" evidence="6">
    <conflict type="erroneous initiation">
        <sequence resource="EMBL-CDS" id="BAB24969"/>
    </conflict>
    <text>Truncated N-terminus.</text>
</comment>
<comment type="sequence caution" evidence="6">
    <conflict type="erroneous initiation">
        <sequence resource="EMBL-CDS" id="BAC38696"/>
    </conflict>
    <text>Truncated N-terminus.</text>
</comment>
<sequence length="161" mass="18186">MARGGARGCPCPSETSASGATAEVKRSAGRPCSRYRPPQTLLLNNRLRPFRCRYRSSATMLEHLSSLPTQMDYKGQKLAEQMFQGIILFSAIVGFIYGYVAEQFGWTVYIVMAGFAFSCLLTLPPWPIYRRHPLKWLPVQDLGTEDKKSGDRKIKRHAKNN</sequence>
<gene>
    <name type="primary">Spcs1</name>
    <name type="synonym">Spc12</name>
</gene>
<proteinExistence type="evidence at transcript level"/>
<keyword id="KW-0256">Endoplasmic reticulum</keyword>
<keyword id="KW-0472">Membrane</keyword>
<keyword id="KW-1185">Reference proteome</keyword>
<keyword id="KW-0812">Transmembrane</keyword>
<keyword id="KW-1133">Transmembrane helix</keyword>
<evidence type="ECO:0000250" key="1">
    <source>
        <dbReference type="UniProtKB" id="P46965"/>
    </source>
</evidence>
<evidence type="ECO:0000250" key="2">
    <source>
        <dbReference type="UniProtKB" id="P83362"/>
    </source>
</evidence>
<evidence type="ECO:0000250" key="3">
    <source>
        <dbReference type="UniProtKB" id="Q9Y6A9"/>
    </source>
</evidence>
<evidence type="ECO:0000255" key="4"/>
<evidence type="ECO:0000256" key="5">
    <source>
        <dbReference type="SAM" id="MobiDB-lite"/>
    </source>
</evidence>
<evidence type="ECO:0000305" key="6"/>
<accession>Q9D958</accession>
<accession>Q8BJM2</accession>
<name>SPCS1_MOUSE</name>
<organism>
    <name type="scientific">Mus musculus</name>
    <name type="common">Mouse</name>
    <dbReference type="NCBI Taxonomy" id="10090"/>
    <lineage>
        <taxon>Eukaryota</taxon>
        <taxon>Metazoa</taxon>
        <taxon>Chordata</taxon>
        <taxon>Craniata</taxon>
        <taxon>Vertebrata</taxon>
        <taxon>Euteleostomi</taxon>
        <taxon>Mammalia</taxon>
        <taxon>Eutheria</taxon>
        <taxon>Euarchontoglires</taxon>
        <taxon>Glires</taxon>
        <taxon>Rodentia</taxon>
        <taxon>Myomorpha</taxon>
        <taxon>Muroidea</taxon>
        <taxon>Muridae</taxon>
        <taxon>Murinae</taxon>
        <taxon>Mus</taxon>
        <taxon>Mus</taxon>
    </lineage>
</organism>
<reference key="1">
    <citation type="journal article" date="2004" name="Genome Res.">
        <title>The status, quality, and expansion of the NIH full-length cDNA project: the Mammalian Gene Collection (MGC).</title>
        <authorList>
            <consortium name="The MGC Project Team"/>
        </authorList>
    </citation>
    <scope>NUCLEOTIDE SEQUENCE [LARGE SCALE MRNA]</scope>
    <source>
        <strain>Czech II</strain>
        <tissue>Mammary gland</tissue>
    </source>
</reference>
<reference key="2">
    <citation type="journal article" date="2005" name="Science">
        <title>The transcriptional landscape of the mammalian genome.</title>
        <authorList>
            <person name="Carninci P."/>
            <person name="Kasukawa T."/>
            <person name="Katayama S."/>
            <person name="Gough J."/>
            <person name="Frith M.C."/>
            <person name="Maeda N."/>
            <person name="Oyama R."/>
            <person name="Ravasi T."/>
            <person name="Lenhard B."/>
            <person name="Wells C."/>
            <person name="Kodzius R."/>
            <person name="Shimokawa K."/>
            <person name="Bajic V.B."/>
            <person name="Brenner S.E."/>
            <person name="Batalov S."/>
            <person name="Forrest A.R."/>
            <person name="Zavolan M."/>
            <person name="Davis M.J."/>
            <person name="Wilming L.G."/>
            <person name="Aidinis V."/>
            <person name="Allen J.E."/>
            <person name="Ambesi-Impiombato A."/>
            <person name="Apweiler R."/>
            <person name="Aturaliya R.N."/>
            <person name="Bailey T.L."/>
            <person name="Bansal M."/>
            <person name="Baxter L."/>
            <person name="Beisel K.W."/>
            <person name="Bersano T."/>
            <person name="Bono H."/>
            <person name="Chalk A.M."/>
            <person name="Chiu K.P."/>
            <person name="Choudhary V."/>
            <person name="Christoffels A."/>
            <person name="Clutterbuck D.R."/>
            <person name="Crowe M.L."/>
            <person name="Dalla E."/>
            <person name="Dalrymple B.P."/>
            <person name="de Bono B."/>
            <person name="Della Gatta G."/>
            <person name="di Bernardo D."/>
            <person name="Down T."/>
            <person name="Engstrom P."/>
            <person name="Fagiolini M."/>
            <person name="Faulkner G."/>
            <person name="Fletcher C.F."/>
            <person name="Fukushima T."/>
            <person name="Furuno M."/>
            <person name="Futaki S."/>
            <person name="Gariboldi M."/>
            <person name="Georgii-Hemming P."/>
            <person name="Gingeras T.R."/>
            <person name="Gojobori T."/>
            <person name="Green R.E."/>
            <person name="Gustincich S."/>
            <person name="Harbers M."/>
            <person name="Hayashi Y."/>
            <person name="Hensch T.K."/>
            <person name="Hirokawa N."/>
            <person name="Hill D."/>
            <person name="Huminiecki L."/>
            <person name="Iacono M."/>
            <person name="Ikeo K."/>
            <person name="Iwama A."/>
            <person name="Ishikawa T."/>
            <person name="Jakt M."/>
            <person name="Kanapin A."/>
            <person name="Katoh M."/>
            <person name="Kawasawa Y."/>
            <person name="Kelso J."/>
            <person name="Kitamura H."/>
            <person name="Kitano H."/>
            <person name="Kollias G."/>
            <person name="Krishnan S.P."/>
            <person name="Kruger A."/>
            <person name="Kummerfeld S.K."/>
            <person name="Kurochkin I.V."/>
            <person name="Lareau L.F."/>
            <person name="Lazarevic D."/>
            <person name="Lipovich L."/>
            <person name="Liu J."/>
            <person name="Liuni S."/>
            <person name="McWilliam S."/>
            <person name="Madan Babu M."/>
            <person name="Madera M."/>
            <person name="Marchionni L."/>
            <person name="Matsuda H."/>
            <person name="Matsuzawa S."/>
            <person name="Miki H."/>
            <person name="Mignone F."/>
            <person name="Miyake S."/>
            <person name="Morris K."/>
            <person name="Mottagui-Tabar S."/>
            <person name="Mulder N."/>
            <person name="Nakano N."/>
            <person name="Nakauchi H."/>
            <person name="Ng P."/>
            <person name="Nilsson R."/>
            <person name="Nishiguchi S."/>
            <person name="Nishikawa S."/>
            <person name="Nori F."/>
            <person name="Ohara O."/>
            <person name="Okazaki Y."/>
            <person name="Orlando V."/>
            <person name="Pang K.C."/>
            <person name="Pavan W.J."/>
            <person name="Pavesi G."/>
            <person name="Pesole G."/>
            <person name="Petrovsky N."/>
            <person name="Piazza S."/>
            <person name="Reed J."/>
            <person name="Reid J.F."/>
            <person name="Ring B.Z."/>
            <person name="Ringwald M."/>
            <person name="Rost B."/>
            <person name="Ruan Y."/>
            <person name="Salzberg S.L."/>
            <person name="Sandelin A."/>
            <person name="Schneider C."/>
            <person name="Schoenbach C."/>
            <person name="Sekiguchi K."/>
            <person name="Semple C.A."/>
            <person name="Seno S."/>
            <person name="Sessa L."/>
            <person name="Sheng Y."/>
            <person name="Shibata Y."/>
            <person name="Shimada H."/>
            <person name="Shimada K."/>
            <person name="Silva D."/>
            <person name="Sinclair B."/>
            <person name="Sperling S."/>
            <person name="Stupka E."/>
            <person name="Sugiura K."/>
            <person name="Sultana R."/>
            <person name="Takenaka Y."/>
            <person name="Taki K."/>
            <person name="Tammoja K."/>
            <person name="Tan S.L."/>
            <person name="Tang S."/>
            <person name="Taylor M.S."/>
            <person name="Tegner J."/>
            <person name="Teichmann S.A."/>
            <person name="Ueda H.R."/>
            <person name="van Nimwegen E."/>
            <person name="Verardo R."/>
            <person name="Wei C.L."/>
            <person name="Yagi K."/>
            <person name="Yamanishi H."/>
            <person name="Zabarovsky E."/>
            <person name="Zhu S."/>
            <person name="Zimmer A."/>
            <person name="Hide W."/>
            <person name="Bult C."/>
            <person name="Grimmond S.M."/>
            <person name="Teasdale R.D."/>
            <person name="Liu E.T."/>
            <person name="Brusic V."/>
            <person name="Quackenbush J."/>
            <person name="Wahlestedt C."/>
            <person name="Mattick J.S."/>
            <person name="Hume D.A."/>
            <person name="Kai C."/>
            <person name="Sasaki D."/>
            <person name="Tomaru Y."/>
            <person name="Fukuda S."/>
            <person name="Kanamori-Katayama M."/>
            <person name="Suzuki M."/>
            <person name="Aoki J."/>
            <person name="Arakawa T."/>
            <person name="Iida J."/>
            <person name="Imamura K."/>
            <person name="Itoh M."/>
            <person name="Kato T."/>
            <person name="Kawaji H."/>
            <person name="Kawagashira N."/>
            <person name="Kawashima T."/>
            <person name="Kojima M."/>
            <person name="Kondo S."/>
            <person name="Konno H."/>
            <person name="Nakano K."/>
            <person name="Ninomiya N."/>
            <person name="Nishio T."/>
            <person name="Okada M."/>
            <person name="Plessy C."/>
            <person name="Shibata K."/>
            <person name="Shiraki T."/>
            <person name="Suzuki S."/>
            <person name="Tagami M."/>
            <person name="Waki K."/>
            <person name="Watahiki A."/>
            <person name="Okamura-Oho Y."/>
            <person name="Suzuki H."/>
            <person name="Kawai J."/>
            <person name="Hayashizaki Y."/>
        </authorList>
    </citation>
    <scope>NUCLEOTIDE SEQUENCE [LARGE SCALE MRNA] OF 19-161</scope>
    <source>
        <strain>C57BL/6J</strain>
        <tissue>Embryo</tissue>
        <tissue>Pancreas</tissue>
    </source>
</reference>